<organism>
    <name type="scientific">Streptococcus pneumoniae (strain CGSP14)</name>
    <dbReference type="NCBI Taxonomy" id="516950"/>
    <lineage>
        <taxon>Bacteria</taxon>
        <taxon>Bacillati</taxon>
        <taxon>Bacillota</taxon>
        <taxon>Bacilli</taxon>
        <taxon>Lactobacillales</taxon>
        <taxon>Streptococcaceae</taxon>
        <taxon>Streptococcus</taxon>
    </lineage>
</organism>
<keyword id="KW-0687">Ribonucleoprotein</keyword>
<keyword id="KW-0689">Ribosomal protein</keyword>
<keyword id="KW-0694">RNA-binding</keyword>
<keyword id="KW-0699">rRNA-binding</keyword>
<keyword id="KW-0820">tRNA-binding</keyword>
<comment type="function">
    <text evidence="1">This is one of the proteins that bind and probably mediate the attachment of the 5S RNA into the large ribosomal subunit, where it forms part of the central protuberance. In the 70S ribosome it contacts protein S13 of the 30S subunit (bridge B1b), connecting the 2 subunits; this bridge is implicated in subunit movement. Contacts the P site tRNA; the 5S rRNA and some of its associated proteins might help stabilize positioning of ribosome-bound tRNAs.</text>
</comment>
<comment type="subunit">
    <text evidence="1">Part of the 50S ribosomal subunit; part of the 5S rRNA/L5/L18/L25 subcomplex. Contacts the 5S rRNA and the P site tRNA. Forms a bridge to the 30S subunit in the 70S ribosome.</text>
</comment>
<comment type="similarity">
    <text evidence="1">Belongs to the universal ribosomal protein uL5 family.</text>
</comment>
<reference key="1">
    <citation type="journal article" date="2009" name="BMC Genomics">
        <title>Genome evolution driven by host adaptations results in a more virulent and antimicrobial-resistant Streptococcus pneumoniae serotype 14.</title>
        <authorList>
            <person name="Ding F."/>
            <person name="Tang P."/>
            <person name="Hsu M.-H."/>
            <person name="Cui P."/>
            <person name="Hu S."/>
            <person name="Yu J."/>
            <person name="Chiu C.-H."/>
        </authorList>
    </citation>
    <scope>NUCLEOTIDE SEQUENCE [LARGE SCALE GENOMIC DNA]</scope>
    <source>
        <strain>CGSP14</strain>
    </source>
</reference>
<sequence>MANRLKEKYLNEVVPALTEQFNYSSVMAVPKVDKIVLNMGVGEAVSNAKSLEKAAEELALISGQKPLITKAKKSIAGFRLREGVAIGAKVTLRGERMYEFLDKLVSVSLPRVRDFHGVPTKSFDGRGNYTLGVKEQLIFPEINFDDVDKTRGLDIVIVTTANTDEESRALLTGLGMPFAK</sequence>
<name>RL5_STRPS</name>
<dbReference type="EMBL" id="CP001033">
    <property type="protein sequence ID" value="ACB89482.1"/>
    <property type="molecule type" value="Genomic_DNA"/>
</dbReference>
<dbReference type="RefSeq" id="WP_000013542.1">
    <property type="nucleotide sequence ID" value="NC_010582.1"/>
</dbReference>
<dbReference type="SMR" id="B2IS52"/>
<dbReference type="GeneID" id="93738969"/>
<dbReference type="KEGG" id="spw:SPCG_0230"/>
<dbReference type="HOGENOM" id="CLU_061015_2_1_9"/>
<dbReference type="GO" id="GO:1990904">
    <property type="term" value="C:ribonucleoprotein complex"/>
    <property type="evidence" value="ECO:0007669"/>
    <property type="project" value="UniProtKB-KW"/>
</dbReference>
<dbReference type="GO" id="GO:0005840">
    <property type="term" value="C:ribosome"/>
    <property type="evidence" value="ECO:0007669"/>
    <property type="project" value="UniProtKB-KW"/>
</dbReference>
<dbReference type="GO" id="GO:0019843">
    <property type="term" value="F:rRNA binding"/>
    <property type="evidence" value="ECO:0007669"/>
    <property type="project" value="UniProtKB-UniRule"/>
</dbReference>
<dbReference type="GO" id="GO:0003735">
    <property type="term" value="F:structural constituent of ribosome"/>
    <property type="evidence" value="ECO:0007669"/>
    <property type="project" value="InterPro"/>
</dbReference>
<dbReference type="GO" id="GO:0000049">
    <property type="term" value="F:tRNA binding"/>
    <property type="evidence" value="ECO:0007669"/>
    <property type="project" value="UniProtKB-UniRule"/>
</dbReference>
<dbReference type="GO" id="GO:0006412">
    <property type="term" value="P:translation"/>
    <property type="evidence" value="ECO:0007669"/>
    <property type="project" value="UniProtKB-UniRule"/>
</dbReference>
<dbReference type="FunFam" id="3.30.1440.10:FF:000001">
    <property type="entry name" value="50S ribosomal protein L5"/>
    <property type="match status" value="1"/>
</dbReference>
<dbReference type="Gene3D" id="3.30.1440.10">
    <property type="match status" value="1"/>
</dbReference>
<dbReference type="HAMAP" id="MF_01333_B">
    <property type="entry name" value="Ribosomal_uL5_B"/>
    <property type="match status" value="1"/>
</dbReference>
<dbReference type="InterPro" id="IPR002132">
    <property type="entry name" value="Ribosomal_uL5"/>
</dbReference>
<dbReference type="InterPro" id="IPR020930">
    <property type="entry name" value="Ribosomal_uL5_bac-type"/>
</dbReference>
<dbReference type="InterPro" id="IPR031309">
    <property type="entry name" value="Ribosomal_uL5_C"/>
</dbReference>
<dbReference type="InterPro" id="IPR020929">
    <property type="entry name" value="Ribosomal_uL5_CS"/>
</dbReference>
<dbReference type="InterPro" id="IPR022803">
    <property type="entry name" value="Ribosomal_uL5_dom_sf"/>
</dbReference>
<dbReference type="InterPro" id="IPR031310">
    <property type="entry name" value="Ribosomal_uL5_N"/>
</dbReference>
<dbReference type="NCBIfam" id="NF000585">
    <property type="entry name" value="PRK00010.1"/>
    <property type="match status" value="1"/>
</dbReference>
<dbReference type="PANTHER" id="PTHR11994">
    <property type="entry name" value="60S RIBOSOMAL PROTEIN L11-RELATED"/>
    <property type="match status" value="1"/>
</dbReference>
<dbReference type="Pfam" id="PF00281">
    <property type="entry name" value="Ribosomal_L5"/>
    <property type="match status" value="1"/>
</dbReference>
<dbReference type="Pfam" id="PF00673">
    <property type="entry name" value="Ribosomal_L5_C"/>
    <property type="match status" value="1"/>
</dbReference>
<dbReference type="PIRSF" id="PIRSF002161">
    <property type="entry name" value="Ribosomal_L5"/>
    <property type="match status" value="1"/>
</dbReference>
<dbReference type="SUPFAM" id="SSF55282">
    <property type="entry name" value="RL5-like"/>
    <property type="match status" value="1"/>
</dbReference>
<dbReference type="PROSITE" id="PS00358">
    <property type="entry name" value="RIBOSOMAL_L5"/>
    <property type="match status" value="1"/>
</dbReference>
<evidence type="ECO:0000255" key="1">
    <source>
        <dbReference type="HAMAP-Rule" id="MF_01333"/>
    </source>
</evidence>
<evidence type="ECO:0000305" key="2"/>
<gene>
    <name evidence="1" type="primary">rplE</name>
    <name type="ordered locus">SPCG_0230</name>
</gene>
<accession>B2IS52</accession>
<proteinExistence type="inferred from homology"/>
<feature type="chain" id="PRO_1000142459" description="Large ribosomal subunit protein uL5">
    <location>
        <begin position="1"/>
        <end position="180"/>
    </location>
</feature>
<protein>
    <recommendedName>
        <fullName evidence="1">Large ribosomal subunit protein uL5</fullName>
    </recommendedName>
    <alternativeName>
        <fullName evidence="2">50S ribosomal protein L5</fullName>
    </alternativeName>
</protein>